<keyword id="KW-1185">Reference proteome</keyword>
<keyword id="KW-0687">Ribonucleoprotein</keyword>
<keyword id="KW-0689">Ribosomal protein</keyword>
<feature type="chain" id="PRO_0000167197" description="Small ribosomal subunit protein bS16">
    <location>
        <begin position="1"/>
        <end position="90"/>
    </location>
</feature>
<comment type="similarity">
    <text evidence="1">Belongs to the bacterial ribosomal protein bS16 family.</text>
</comment>
<sequence length="90" mass="10281">MSVKIRLTRMGSKKKPFYRINVADSRAPRDGKFIETVGTYNPLVTEEQVTLKEERVLEWLSKGAQPSDTVRNLLSKAGVMKKFHESKLSK</sequence>
<organism>
    <name type="scientific">Lactococcus lactis subsp. lactis (strain IL1403)</name>
    <name type="common">Streptococcus lactis</name>
    <dbReference type="NCBI Taxonomy" id="272623"/>
    <lineage>
        <taxon>Bacteria</taxon>
        <taxon>Bacillati</taxon>
        <taxon>Bacillota</taxon>
        <taxon>Bacilli</taxon>
        <taxon>Lactobacillales</taxon>
        <taxon>Streptococcaceae</taxon>
        <taxon>Lactococcus</taxon>
    </lineage>
</organism>
<accession>Q9CFB2</accession>
<protein>
    <recommendedName>
        <fullName evidence="1">Small ribosomal subunit protein bS16</fullName>
    </recommendedName>
    <alternativeName>
        <fullName evidence="2">30S ribosomal protein S16</fullName>
    </alternativeName>
</protein>
<reference key="1">
    <citation type="journal article" date="2001" name="Genome Res.">
        <title>The complete genome sequence of the lactic acid bacterium Lactococcus lactis ssp. lactis IL1403.</title>
        <authorList>
            <person name="Bolotin A."/>
            <person name="Wincker P."/>
            <person name="Mauger S."/>
            <person name="Jaillon O."/>
            <person name="Malarme K."/>
            <person name="Weissenbach J."/>
            <person name="Ehrlich S.D."/>
            <person name="Sorokin A."/>
        </authorList>
    </citation>
    <scope>NUCLEOTIDE SEQUENCE [LARGE SCALE GENOMIC DNA]</scope>
    <source>
        <strain>IL1403</strain>
    </source>
</reference>
<gene>
    <name evidence="1" type="primary">rpsP</name>
    <name type="ordered locus">LL1569</name>
    <name type="ORF">L0393</name>
</gene>
<evidence type="ECO:0000255" key="1">
    <source>
        <dbReference type="HAMAP-Rule" id="MF_00385"/>
    </source>
</evidence>
<evidence type="ECO:0000305" key="2"/>
<dbReference type="EMBL" id="AE005176">
    <property type="protein sequence ID" value="AAK05667.1"/>
    <property type="molecule type" value="Genomic_DNA"/>
</dbReference>
<dbReference type="PIR" id="A86821">
    <property type="entry name" value="A86821"/>
</dbReference>
<dbReference type="RefSeq" id="NP_267725.1">
    <property type="nucleotide sequence ID" value="NC_002662.1"/>
</dbReference>
<dbReference type="RefSeq" id="WP_003130711.1">
    <property type="nucleotide sequence ID" value="NC_002662.1"/>
</dbReference>
<dbReference type="SMR" id="Q9CFB2"/>
<dbReference type="PaxDb" id="272623-L0393"/>
<dbReference type="EnsemblBacteria" id="AAK05667">
    <property type="protein sequence ID" value="AAK05667"/>
    <property type="gene ID" value="L0393"/>
</dbReference>
<dbReference type="GeneID" id="89633769"/>
<dbReference type="KEGG" id="lla:L0393"/>
<dbReference type="PATRIC" id="fig|272623.7.peg.1687"/>
<dbReference type="eggNOG" id="COG0228">
    <property type="taxonomic scope" value="Bacteria"/>
</dbReference>
<dbReference type="HOGENOM" id="CLU_100590_5_0_9"/>
<dbReference type="OrthoDB" id="9807878at2"/>
<dbReference type="Proteomes" id="UP000002196">
    <property type="component" value="Chromosome"/>
</dbReference>
<dbReference type="GO" id="GO:0005737">
    <property type="term" value="C:cytoplasm"/>
    <property type="evidence" value="ECO:0007669"/>
    <property type="project" value="UniProtKB-ARBA"/>
</dbReference>
<dbReference type="GO" id="GO:0015935">
    <property type="term" value="C:small ribosomal subunit"/>
    <property type="evidence" value="ECO:0007669"/>
    <property type="project" value="TreeGrafter"/>
</dbReference>
<dbReference type="GO" id="GO:0003735">
    <property type="term" value="F:structural constituent of ribosome"/>
    <property type="evidence" value="ECO:0007669"/>
    <property type="project" value="InterPro"/>
</dbReference>
<dbReference type="GO" id="GO:0006412">
    <property type="term" value="P:translation"/>
    <property type="evidence" value="ECO:0007669"/>
    <property type="project" value="UniProtKB-UniRule"/>
</dbReference>
<dbReference type="FunFam" id="3.30.1320.10:FF:000002">
    <property type="entry name" value="30S ribosomal protein S16"/>
    <property type="match status" value="1"/>
</dbReference>
<dbReference type="Gene3D" id="3.30.1320.10">
    <property type="match status" value="1"/>
</dbReference>
<dbReference type="HAMAP" id="MF_00385">
    <property type="entry name" value="Ribosomal_bS16"/>
    <property type="match status" value="1"/>
</dbReference>
<dbReference type="InterPro" id="IPR000307">
    <property type="entry name" value="Ribosomal_bS16"/>
</dbReference>
<dbReference type="InterPro" id="IPR023803">
    <property type="entry name" value="Ribosomal_bS16_dom_sf"/>
</dbReference>
<dbReference type="NCBIfam" id="TIGR00002">
    <property type="entry name" value="S16"/>
    <property type="match status" value="1"/>
</dbReference>
<dbReference type="PANTHER" id="PTHR12919">
    <property type="entry name" value="30S RIBOSOMAL PROTEIN S16"/>
    <property type="match status" value="1"/>
</dbReference>
<dbReference type="PANTHER" id="PTHR12919:SF20">
    <property type="entry name" value="SMALL RIBOSOMAL SUBUNIT PROTEIN BS16M"/>
    <property type="match status" value="1"/>
</dbReference>
<dbReference type="Pfam" id="PF00886">
    <property type="entry name" value="Ribosomal_S16"/>
    <property type="match status" value="1"/>
</dbReference>
<dbReference type="SUPFAM" id="SSF54565">
    <property type="entry name" value="Ribosomal protein S16"/>
    <property type="match status" value="1"/>
</dbReference>
<proteinExistence type="inferred from homology"/>
<name>RS16_LACLA</name>